<comment type="function">
    <text evidence="1">F(1)F(0) ATP synthase produces ATP from ADP in the presence of a proton or sodium gradient. F-type ATPases consist of two structural domains, F(1) containing the extramembraneous catalytic core and F(0) containing the membrane proton channel, linked together by a central stalk and a peripheral stalk. During catalysis, ATP synthesis in the catalytic domain of F(1) is coupled via a rotary mechanism of the central stalk subunits to proton translocation.</text>
</comment>
<comment type="function">
    <text evidence="1">Component of the F(0) channel, it forms part of the peripheral stalk, linking F(1) to F(0).</text>
</comment>
<comment type="subunit">
    <text evidence="1">F-type ATPases have 2 components, F(1) - the catalytic core - and F(0) - the membrane proton channel. F(1) has five subunits: alpha(3), beta(3), gamma(1), delta(1), epsilon(1). F(0) has three main subunits: a(1), b(2) and c(10-14). The alpha and beta chains form an alternating ring which encloses part of the gamma chain. F(1) is attached to F(0) by a central stalk formed by the gamma and epsilon chains, while a peripheral stalk is formed by the delta and b chains.</text>
</comment>
<comment type="subcellular location">
    <subcellularLocation>
        <location evidence="1">Cell membrane</location>
        <topology evidence="1">Single-pass membrane protein</topology>
    </subcellularLocation>
</comment>
<comment type="similarity">
    <text evidence="1">Belongs to the ATPase B chain family.</text>
</comment>
<gene>
    <name evidence="1" type="primary">atpF</name>
    <name type="ordered locus">Tfu_2411</name>
</gene>
<keyword id="KW-0066">ATP synthesis</keyword>
<keyword id="KW-1003">Cell membrane</keyword>
<keyword id="KW-0138">CF(0)</keyword>
<keyword id="KW-0375">Hydrogen ion transport</keyword>
<keyword id="KW-0406">Ion transport</keyword>
<keyword id="KW-0472">Membrane</keyword>
<keyword id="KW-0812">Transmembrane</keyword>
<keyword id="KW-1133">Transmembrane helix</keyword>
<keyword id="KW-0813">Transport</keyword>
<accession>Q47M78</accession>
<evidence type="ECO:0000255" key="1">
    <source>
        <dbReference type="HAMAP-Rule" id="MF_01398"/>
    </source>
</evidence>
<sequence>MLGLAAEENVLRIHIDELVFGLIAFAVIFALVYRYAVPRVTKMLDERADAIEGGIERAKKAEAEAEELRQQFQEKLEEAHRSYAAELQKASEQSAAIIAEAREEAQAEARRIIEAAHAQIEADRQQAMAQLRAEIGALSADLAARIVGETLSDPAAQSRVIDRFLAELESGANQQAEVR</sequence>
<proteinExistence type="inferred from homology"/>
<feature type="chain" id="PRO_0000368838" description="ATP synthase subunit b">
    <location>
        <begin position="1"/>
        <end position="179"/>
    </location>
</feature>
<feature type="transmembrane region" description="Helical" evidence="1">
    <location>
        <begin position="13"/>
        <end position="33"/>
    </location>
</feature>
<protein>
    <recommendedName>
        <fullName evidence="1">ATP synthase subunit b</fullName>
    </recommendedName>
    <alternativeName>
        <fullName evidence="1">ATP synthase F(0) sector subunit b</fullName>
    </alternativeName>
    <alternativeName>
        <fullName evidence="1">ATPase subunit I</fullName>
    </alternativeName>
    <alternativeName>
        <fullName evidence="1">F-type ATPase subunit b</fullName>
        <shortName evidence="1">F-ATPase subunit b</shortName>
    </alternativeName>
</protein>
<organism>
    <name type="scientific">Thermobifida fusca (strain YX)</name>
    <dbReference type="NCBI Taxonomy" id="269800"/>
    <lineage>
        <taxon>Bacteria</taxon>
        <taxon>Bacillati</taxon>
        <taxon>Actinomycetota</taxon>
        <taxon>Actinomycetes</taxon>
        <taxon>Streptosporangiales</taxon>
        <taxon>Nocardiopsidaceae</taxon>
        <taxon>Thermobifida</taxon>
    </lineage>
</organism>
<dbReference type="EMBL" id="CP000088">
    <property type="protein sequence ID" value="AAZ56444.1"/>
    <property type="molecule type" value="Genomic_DNA"/>
</dbReference>
<dbReference type="RefSeq" id="WP_011292834.1">
    <property type="nucleotide sequence ID" value="NC_007333.1"/>
</dbReference>
<dbReference type="SMR" id="Q47M78"/>
<dbReference type="STRING" id="269800.Tfu_2411"/>
<dbReference type="KEGG" id="tfu:Tfu_2411"/>
<dbReference type="eggNOG" id="COG0711">
    <property type="taxonomic scope" value="Bacteria"/>
</dbReference>
<dbReference type="HOGENOM" id="CLU_079215_5_1_11"/>
<dbReference type="OrthoDB" id="5243563at2"/>
<dbReference type="GO" id="GO:0005886">
    <property type="term" value="C:plasma membrane"/>
    <property type="evidence" value="ECO:0007669"/>
    <property type="project" value="UniProtKB-SubCell"/>
</dbReference>
<dbReference type="GO" id="GO:0045259">
    <property type="term" value="C:proton-transporting ATP synthase complex"/>
    <property type="evidence" value="ECO:0007669"/>
    <property type="project" value="UniProtKB-KW"/>
</dbReference>
<dbReference type="GO" id="GO:0046933">
    <property type="term" value="F:proton-transporting ATP synthase activity, rotational mechanism"/>
    <property type="evidence" value="ECO:0007669"/>
    <property type="project" value="UniProtKB-UniRule"/>
</dbReference>
<dbReference type="GO" id="GO:0046961">
    <property type="term" value="F:proton-transporting ATPase activity, rotational mechanism"/>
    <property type="evidence" value="ECO:0007669"/>
    <property type="project" value="TreeGrafter"/>
</dbReference>
<dbReference type="CDD" id="cd06503">
    <property type="entry name" value="ATP-synt_Fo_b"/>
    <property type="match status" value="1"/>
</dbReference>
<dbReference type="Gene3D" id="1.20.5.620">
    <property type="entry name" value="F1F0 ATP synthase subunit B, membrane domain"/>
    <property type="match status" value="1"/>
</dbReference>
<dbReference type="HAMAP" id="MF_01398">
    <property type="entry name" value="ATP_synth_b_bprime"/>
    <property type="match status" value="1"/>
</dbReference>
<dbReference type="InterPro" id="IPR028987">
    <property type="entry name" value="ATP_synth_B-like_membr_sf"/>
</dbReference>
<dbReference type="InterPro" id="IPR002146">
    <property type="entry name" value="ATP_synth_b/b'su_bac/chlpt"/>
</dbReference>
<dbReference type="InterPro" id="IPR005864">
    <property type="entry name" value="ATP_synth_F0_bsu_bac"/>
</dbReference>
<dbReference type="InterPro" id="IPR050059">
    <property type="entry name" value="ATP_synthase_B_chain"/>
</dbReference>
<dbReference type="NCBIfam" id="TIGR01144">
    <property type="entry name" value="ATP_synt_b"/>
    <property type="match status" value="1"/>
</dbReference>
<dbReference type="NCBIfam" id="NF004412">
    <property type="entry name" value="PRK05759.1-3"/>
    <property type="match status" value="1"/>
</dbReference>
<dbReference type="PANTHER" id="PTHR33445:SF1">
    <property type="entry name" value="ATP SYNTHASE SUBUNIT B"/>
    <property type="match status" value="1"/>
</dbReference>
<dbReference type="PANTHER" id="PTHR33445">
    <property type="entry name" value="ATP SYNTHASE SUBUNIT B', CHLOROPLASTIC"/>
    <property type="match status" value="1"/>
</dbReference>
<dbReference type="Pfam" id="PF00430">
    <property type="entry name" value="ATP-synt_B"/>
    <property type="match status" value="1"/>
</dbReference>
<dbReference type="SUPFAM" id="SSF81573">
    <property type="entry name" value="F1F0 ATP synthase subunit B, membrane domain"/>
    <property type="match status" value="1"/>
</dbReference>
<name>ATPF_THEFY</name>
<reference key="1">
    <citation type="journal article" date="2007" name="J. Bacteriol.">
        <title>Genome sequence and analysis of the soil cellulolytic actinomycete Thermobifida fusca YX.</title>
        <authorList>
            <person name="Lykidis A."/>
            <person name="Mavromatis K."/>
            <person name="Ivanova N."/>
            <person name="Anderson I."/>
            <person name="Land M."/>
            <person name="DiBartolo G."/>
            <person name="Martinez M."/>
            <person name="Lapidus A."/>
            <person name="Lucas S."/>
            <person name="Copeland A."/>
            <person name="Richardson P."/>
            <person name="Wilson D.B."/>
            <person name="Kyrpides N."/>
        </authorList>
    </citation>
    <scope>NUCLEOTIDE SEQUENCE [LARGE SCALE GENOMIC DNA]</scope>
    <source>
        <strain>YX</strain>
    </source>
</reference>